<reference key="1">
    <citation type="journal article" date="2008" name="BMC Genomics">
        <title>The genome sequence of the fish pathogen Aliivibrio salmonicida strain LFI1238 shows extensive evidence of gene decay.</title>
        <authorList>
            <person name="Hjerde E."/>
            <person name="Lorentzen M.S."/>
            <person name="Holden M.T."/>
            <person name="Seeger K."/>
            <person name="Paulsen S."/>
            <person name="Bason N."/>
            <person name="Churcher C."/>
            <person name="Harris D."/>
            <person name="Norbertczak H."/>
            <person name="Quail M.A."/>
            <person name="Sanders S."/>
            <person name="Thurston S."/>
            <person name="Parkhill J."/>
            <person name="Willassen N.P."/>
            <person name="Thomson N.R."/>
        </authorList>
    </citation>
    <scope>NUCLEOTIDE SEQUENCE [LARGE SCALE GENOMIC DNA]</scope>
    <source>
        <strain>LFI1238</strain>
    </source>
</reference>
<sequence length="172" mass="19357">MAEKRNIFLVGPMGAGKSTIGRHLAQQLHMEFLDSDTVIEERTGADIAWVFDVEGEEGFRIREEGVINDLTQEQGIVLATGGGSVISKESRNRLSARGVVVYLETTIEKQLARTQRDKKRPLLQTDEPREVLEALAKERNALYEEVSDYVVRTDDQSAKVVANQIIQMLEER</sequence>
<evidence type="ECO:0000255" key="1">
    <source>
        <dbReference type="HAMAP-Rule" id="MF_00109"/>
    </source>
</evidence>
<proteinExistence type="inferred from homology"/>
<organism>
    <name type="scientific">Aliivibrio salmonicida (strain LFI1238)</name>
    <name type="common">Vibrio salmonicida (strain LFI1238)</name>
    <dbReference type="NCBI Taxonomy" id="316275"/>
    <lineage>
        <taxon>Bacteria</taxon>
        <taxon>Pseudomonadati</taxon>
        <taxon>Pseudomonadota</taxon>
        <taxon>Gammaproteobacteria</taxon>
        <taxon>Vibrionales</taxon>
        <taxon>Vibrionaceae</taxon>
        <taxon>Aliivibrio</taxon>
    </lineage>
</organism>
<keyword id="KW-0028">Amino-acid biosynthesis</keyword>
<keyword id="KW-0057">Aromatic amino acid biosynthesis</keyword>
<keyword id="KW-0067">ATP-binding</keyword>
<keyword id="KW-0963">Cytoplasm</keyword>
<keyword id="KW-0418">Kinase</keyword>
<keyword id="KW-0460">Magnesium</keyword>
<keyword id="KW-0479">Metal-binding</keyword>
<keyword id="KW-0547">Nucleotide-binding</keyword>
<keyword id="KW-0808">Transferase</keyword>
<feature type="chain" id="PRO_1000094369" description="Shikimate kinase">
    <location>
        <begin position="1"/>
        <end position="172"/>
    </location>
</feature>
<feature type="binding site" evidence="1">
    <location>
        <begin position="14"/>
        <end position="19"/>
    </location>
    <ligand>
        <name>ATP</name>
        <dbReference type="ChEBI" id="CHEBI:30616"/>
    </ligand>
</feature>
<feature type="binding site" evidence="1">
    <location>
        <position position="18"/>
    </location>
    <ligand>
        <name>Mg(2+)</name>
        <dbReference type="ChEBI" id="CHEBI:18420"/>
    </ligand>
</feature>
<feature type="binding site" evidence="1">
    <location>
        <position position="36"/>
    </location>
    <ligand>
        <name>substrate</name>
    </ligand>
</feature>
<feature type="binding site" evidence="1">
    <location>
        <position position="60"/>
    </location>
    <ligand>
        <name>substrate</name>
    </ligand>
</feature>
<feature type="binding site" evidence="1">
    <location>
        <position position="82"/>
    </location>
    <ligand>
        <name>substrate</name>
    </ligand>
</feature>
<feature type="binding site" evidence="1">
    <location>
        <position position="120"/>
    </location>
    <ligand>
        <name>ATP</name>
        <dbReference type="ChEBI" id="CHEBI:30616"/>
    </ligand>
</feature>
<feature type="binding site" evidence="1">
    <location>
        <position position="139"/>
    </location>
    <ligand>
        <name>substrate</name>
    </ligand>
</feature>
<feature type="binding site" evidence="1">
    <location>
        <position position="156"/>
    </location>
    <ligand>
        <name>ATP</name>
        <dbReference type="ChEBI" id="CHEBI:30616"/>
    </ligand>
</feature>
<comment type="function">
    <text evidence="1">Catalyzes the specific phosphorylation of the 3-hydroxyl group of shikimic acid using ATP as a cosubstrate.</text>
</comment>
<comment type="catalytic activity">
    <reaction evidence="1">
        <text>shikimate + ATP = 3-phosphoshikimate + ADP + H(+)</text>
        <dbReference type="Rhea" id="RHEA:13121"/>
        <dbReference type="ChEBI" id="CHEBI:15378"/>
        <dbReference type="ChEBI" id="CHEBI:30616"/>
        <dbReference type="ChEBI" id="CHEBI:36208"/>
        <dbReference type="ChEBI" id="CHEBI:145989"/>
        <dbReference type="ChEBI" id="CHEBI:456216"/>
        <dbReference type="EC" id="2.7.1.71"/>
    </reaction>
</comment>
<comment type="cofactor">
    <cofactor evidence="1">
        <name>Mg(2+)</name>
        <dbReference type="ChEBI" id="CHEBI:18420"/>
    </cofactor>
    <text evidence="1">Binds 1 Mg(2+) ion per subunit.</text>
</comment>
<comment type="pathway">
    <text evidence="1">Metabolic intermediate biosynthesis; chorismate biosynthesis; chorismate from D-erythrose 4-phosphate and phosphoenolpyruvate: step 5/7.</text>
</comment>
<comment type="subunit">
    <text evidence="1">Monomer.</text>
</comment>
<comment type="subcellular location">
    <subcellularLocation>
        <location evidence="1">Cytoplasm</location>
    </subcellularLocation>
</comment>
<comment type="similarity">
    <text evidence="1">Belongs to the shikimate kinase family.</text>
</comment>
<gene>
    <name evidence="1" type="primary">aroK</name>
    <name type="ordered locus">VSAL_I2722</name>
</gene>
<name>AROK_ALISL</name>
<accession>B6EM43</accession>
<dbReference type="EC" id="2.7.1.71" evidence="1"/>
<dbReference type="EMBL" id="FM178379">
    <property type="protein sequence ID" value="CAQ80406.1"/>
    <property type="molecule type" value="Genomic_DNA"/>
</dbReference>
<dbReference type="RefSeq" id="WP_012551169.1">
    <property type="nucleotide sequence ID" value="NC_011312.1"/>
</dbReference>
<dbReference type="SMR" id="B6EM43"/>
<dbReference type="GeneID" id="56276723"/>
<dbReference type="KEGG" id="vsa:VSAL_I2722"/>
<dbReference type="eggNOG" id="COG0703">
    <property type="taxonomic scope" value="Bacteria"/>
</dbReference>
<dbReference type="HOGENOM" id="CLU_057607_2_2_6"/>
<dbReference type="UniPathway" id="UPA00053">
    <property type="reaction ID" value="UER00088"/>
</dbReference>
<dbReference type="Proteomes" id="UP000001730">
    <property type="component" value="Chromosome 1"/>
</dbReference>
<dbReference type="GO" id="GO:0005829">
    <property type="term" value="C:cytosol"/>
    <property type="evidence" value="ECO:0007669"/>
    <property type="project" value="TreeGrafter"/>
</dbReference>
<dbReference type="GO" id="GO:0005524">
    <property type="term" value="F:ATP binding"/>
    <property type="evidence" value="ECO:0007669"/>
    <property type="project" value="UniProtKB-UniRule"/>
</dbReference>
<dbReference type="GO" id="GO:0000287">
    <property type="term" value="F:magnesium ion binding"/>
    <property type="evidence" value="ECO:0007669"/>
    <property type="project" value="UniProtKB-UniRule"/>
</dbReference>
<dbReference type="GO" id="GO:0004765">
    <property type="term" value="F:shikimate kinase activity"/>
    <property type="evidence" value="ECO:0007669"/>
    <property type="project" value="UniProtKB-UniRule"/>
</dbReference>
<dbReference type="GO" id="GO:0008652">
    <property type="term" value="P:amino acid biosynthetic process"/>
    <property type="evidence" value="ECO:0007669"/>
    <property type="project" value="UniProtKB-KW"/>
</dbReference>
<dbReference type="GO" id="GO:0009073">
    <property type="term" value="P:aromatic amino acid family biosynthetic process"/>
    <property type="evidence" value="ECO:0007669"/>
    <property type="project" value="UniProtKB-KW"/>
</dbReference>
<dbReference type="GO" id="GO:0009423">
    <property type="term" value="P:chorismate biosynthetic process"/>
    <property type="evidence" value="ECO:0007669"/>
    <property type="project" value="UniProtKB-UniRule"/>
</dbReference>
<dbReference type="CDD" id="cd00464">
    <property type="entry name" value="SK"/>
    <property type="match status" value="1"/>
</dbReference>
<dbReference type="FunFam" id="3.40.50.300:FF:000099">
    <property type="entry name" value="Shikimate kinase 1"/>
    <property type="match status" value="1"/>
</dbReference>
<dbReference type="Gene3D" id="3.40.50.300">
    <property type="entry name" value="P-loop containing nucleotide triphosphate hydrolases"/>
    <property type="match status" value="1"/>
</dbReference>
<dbReference type="HAMAP" id="MF_00109">
    <property type="entry name" value="Shikimate_kinase"/>
    <property type="match status" value="1"/>
</dbReference>
<dbReference type="InterPro" id="IPR027417">
    <property type="entry name" value="P-loop_NTPase"/>
</dbReference>
<dbReference type="InterPro" id="IPR031322">
    <property type="entry name" value="Shikimate/glucono_kinase"/>
</dbReference>
<dbReference type="InterPro" id="IPR000623">
    <property type="entry name" value="Shikimate_kinase/TSH1"/>
</dbReference>
<dbReference type="InterPro" id="IPR023000">
    <property type="entry name" value="Shikimate_kinase_CS"/>
</dbReference>
<dbReference type="NCBIfam" id="NF003456">
    <property type="entry name" value="PRK05057.1"/>
    <property type="match status" value="1"/>
</dbReference>
<dbReference type="PANTHER" id="PTHR21087">
    <property type="entry name" value="SHIKIMATE KINASE"/>
    <property type="match status" value="1"/>
</dbReference>
<dbReference type="PANTHER" id="PTHR21087:SF16">
    <property type="entry name" value="SHIKIMATE KINASE 1, CHLOROPLASTIC"/>
    <property type="match status" value="1"/>
</dbReference>
<dbReference type="Pfam" id="PF01202">
    <property type="entry name" value="SKI"/>
    <property type="match status" value="1"/>
</dbReference>
<dbReference type="PRINTS" id="PR01100">
    <property type="entry name" value="SHIKIMTKNASE"/>
</dbReference>
<dbReference type="SUPFAM" id="SSF52540">
    <property type="entry name" value="P-loop containing nucleoside triphosphate hydrolases"/>
    <property type="match status" value="1"/>
</dbReference>
<dbReference type="PROSITE" id="PS01128">
    <property type="entry name" value="SHIKIMATE_KINASE"/>
    <property type="match status" value="1"/>
</dbReference>
<protein>
    <recommendedName>
        <fullName evidence="1">Shikimate kinase</fullName>
        <shortName evidence="1">SK</shortName>
        <ecNumber evidence="1">2.7.1.71</ecNumber>
    </recommendedName>
</protein>